<proteinExistence type="evidence at transcript level"/>
<name>GLMPA_XENLA</name>
<accession>Q6AX53</accession>
<protein>
    <recommendedName>
        <fullName evidence="1">Glycosylated lysosomal membrane protein A</fullName>
    </recommendedName>
    <alternativeName>
        <fullName evidence="1">Lysosomal protein NCU-G1-A</fullName>
    </alternativeName>
</protein>
<sequence>MGCTRGWRLLLLLGLVCVGALQGRGQEESREVSLQYNPGSSDTSVNVVHVRAVGNGSTIHYVWSTIGTPTVLLIFTHSETSQLQVNWTKLLSPAPQGALRIEPAESVSYATALLFTRIFEYQDVNNTANFSGTDEKYFYPAYNLSDFLWDSANATINATSLSANLTGYNASDPTDSFHNGSVSFRISAYSSSGRDSSSPRLRHTANCTKLEFLVAGVRPRGNNSRFALEMVTIEKEGRKKMESVHSIDDEYTPTIFEMMQLVPDAPNSSHARGFLQWKSVAYGSPSGTRADILPCQLHPLRPFNTTFPAGSIAHAYFGDDLADAYKLEAFNISFGIADGDFYDKNRFLSWSALIGYGEPPRDSFSILVICIMAVALGTPLLLLIVGTLVVTALRHKVYSNYEPIN</sequence>
<keyword id="KW-0325">Glycoprotein</keyword>
<keyword id="KW-0458">Lysosome</keyword>
<keyword id="KW-0472">Membrane</keyword>
<keyword id="KW-1185">Reference proteome</keyword>
<keyword id="KW-0732">Signal</keyword>
<keyword id="KW-0812">Transmembrane</keyword>
<keyword id="KW-1133">Transmembrane helix</keyword>
<dbReference type="EMBL" id="BC079752">
    <property type="protein sequence ID" value="AAH79752.1"/>
    <property type="molecule type" value="mRNA"/>
</dbReference>
<dbReference type="SMR" id="Q6AX53"/>
<dbReference type="GlyCosmos" id="Q6AX53">
    <property type="glycosylation" value="15 sites, No reported glycans"/>
</dbReference>
<dbReference type="AGR" id="Xenbase:XB-GENE-6251699"/>
<dbReference type="Xenbase" id="XB-GENE-6251699">
    <property type="gene designation" value="glmp.L"/>
</dbReference>
<dbReference type="OMA" id="TLHYLWD"/>
<dbReference type="OrthoDB" id="6264340at2759"/>
<dbReference type="Proteomes" id="UP000186698">
    <property type="component" value="Unplaced"/>
</dbReference>
<dbReference type="GO" id="GO:0005765">
    <property type="term" value="C:lysosomal membrane"/>
    <property type="evidence" value="ECO:0007669"/>
    <property type="project" value="UniProtKB-SubCell"/>
</dbReference>
<dbReference type="GO" id="GO:0005764">
    <property type="term" value="C:lysosome"/>
    <property type="evidence" value="ECO:0000250"/>
    <property type="project" value="UniProtKB"/>
</dbReference>
<dbReference type="GO" id="GO:0016020">
    <property type="term" value="C:membrane"/>
    <property type="evidence" value="ECO:0000250"/>
    <property type="project" value="UniProtKB"/>
</dbReference>
<dbReference type="GO" id="GO:0061462">
    <property type="term" value="P:protein localization to lysosome"/>
    <property type="evidence" value="ECO:0000250"/>
    <property type="project" value="UniProtKB"/>
</dbReference>
<dbReference type="GO" id="GO:0050821">
    <property type="term" value="P:protein stabilization"/>
    <property type="evidence" value="ECO:0000250"/>
    <property type="project" value="UniProtKB"/>
</dbReference>
<dbReference type="InterPro" id="IPR029382">
    <property type="entry name" value="NCU-G1"/>
</dbReference>
<dbReference type="PANTHER" id="PTHR31981">
    <property type="entry name" value="GLYCOSYLATED LYSOSOMAL MEMBRANE PROTEIN"/>
    <property type="match status" value="1"/>
</dbReference>
<dbReference type="PANTHER" id="PTHR31981:SF1">
    <property type="entry name" value="GLYCOSYLATED LYSOSOMAL MEMBRANE PROTEIN"/>
    <property type="match status" value="1"/>
</dbReference>
<dbReference type="Pfam" id="PF15065">
    <property type="entry name" value="NCU-G1"/>
    <property type="match status" value="1"/>
</dbReference>
<evidence type="ECO:0000250" key="1">
    <source>
        <dbReference type="UniProtKB" id="Q8WWB7"/>
    </source>
</evidence>
<evidence type="ECO:0000250" key="2">
    <source>
        <dbReference type="UniProtKB" id="Q9JHJ3"/>
    </source>
</evidence>
<evidence type="ECO:0000255" key="3"/>
<evidence type="ECO:0000305" key="4"/>
<gene>
    <name type="primary">glmp-a</name>
</gene>
<reference key="1">
    <citation type="submission" date="2004-08" db="EMBL/GenBank/DDBJ databases">
        <authorList>
            <consortium name="NIH - Xenopus Gene Collection (XGC) project"/>
        </authorList>
    </citation>
    <scope>NUCLEOTIDE SEQUENCE [LARGE SCALE MRNA]</scope>
    <source>
        <tissue>Eye</tissue>
    </source>
</reference>
<comment type="function">
    <text evidence="2">Required to protect lysosomal transporter MFSD1 from lysosomal proteolysis and for MFSD1 lysosomal localization.</text>
</comment>
<comment type="subunit">
    <text evidence="2">Interacts (via lumenal domain) with lysosomal protein MFSD1; the interaction starts while both proteins are still in the endoplasmic reticulum and is required for stabilization of MFSD1 in lysosomes but has no direct effect on its targeting to lysosomes or transporter activity.</text>
</comment>
<comment type="subcellular location">
    <subcellularLocation>
        <location evidence="2">Lysosome membrane</location>
        <topology evidence="3">Single-pass type I membrane protein</topology>
        <orientation evidence="4">Lumenal side</orientation>
    </subcellularLocation>
</comment>
<comment type="similarity">
    <text evidence="4">Belongs to the GLMP family.</text>
</comment>
<feature type="signal peptide" evidence="3">
    <location>
        <begin position="1"/>
        <end position="25"/>
    </location>
</feature>
<feature type="chain" id="PRO_0000381838" description="Glycosylated lysosomal membrane protein A" evidence="4">
    <location>
        <begin position="26"/>
        <end position="405"/>
    </location>
</feature>
<feature type="topological domain" description="Lumenal" evidence="3">
    <location>
        <begin position="26"/>
        <end position="365"/>
    </location>
</feature>
<feature type="transmembrane region" description="Helical" evidence="3">
    <location>
        <begin position="366"/>
        <end position="386"/>
    </location>
</feature>
<feature type="topological domain" description="Cytoplasmic" evidence="3">
    <location>
        <begin position="387"/>
        <end position="405"/>
    </location>
</feature>
<feature type="short sequence motif" description="Lysosomal targeting motif" evidence="2">
    <location>
        <begin position="401"/>
        <end position="405"/>
    </location>
</feature>
<feature type="glycosylation site" description="N-linked (GlcNAc...) asparagine" evidence="3">
    <location>
        <position position="55"/>
    </location>
</feature>
<feature type="glycosylation site" description="N-linked (GlcNAc...) asparagine" evidence="3">
    <location>
        <position position="86"/>
    </location>
</feature>
<feature type="glycosylation site" description="N-linked (GlcNAc...) asparagine" evidence="3">
    <location>
        <position position="125"/>
    </location>
</feature>
<feature type="glycosylation site" description="N-linked (GlcNAc...) asparagine" evidence="3">
    <location>
        <position position="129"/>
    </location>
</feature>
<feature type="glycosylation site" description="N-linked (GlcNAc...) asparagine" evidence="3">
    <location>
        <position position="143"/>
    </location>
</feature>
<feature type="glycosylation site" description="N-linked (GlcNAc...) asparagine" evidence="3">
    <location>
        <position position="153"/>
    </location>
</feature>
<feature type="glycosylation site" description="N-linked (GlcNAc...) asparagine" evidence="3">
    <location>
        <position position="157"/>
    </location>
</feature>
<feature type="glycosylation site" description="N-linked (GlcNAc...) asparagine" evidence="3">
    <location>
        <position position="164"/>
    </location>
</feature>
<feature type="glycosylation site" description="N-linked (GlcNAc...) asparagine" evidence="3">
    <location>
        <position position="169"/>
    </location>
</feature>
<feature type="glycosylation site" description="N-linked (GlcNAc...) asparagine" evidence="3">
    <location>
        <position position="179"/>
    </location>
</feature>
<feature type="glycosylation site" description="N-linked (GlcNAc...) asparagine" evidence="3">
    <location>
        <position position="206"/>
    </location>
</feature>
<feature type="glycosylation site" description="N-linked (GlcNAc...) asparagine" evidence="3">
    <location>
        <position position="222"/>
    </location>
</feature>
<feature type="glycosylation site" description="N-linked (GlcNAc...) asparagine" evidence="3">
    <location>
        <position position="267"/>
    </location>
</feature>
<feature type="glycosylation site" description="N-linked (GlcNAc...) asparagine" evidence="3">
    <location>
        <position position="304"/>
    </location>
</feature>
<feature type="glycosylation site" description="N-linked (GlcNAc...) asparagine" evidence="3">
    <location>
        <position position="331"/>
    </location>
</feature>
<organism>
    <name type="scientific">Xenopus laevis</name>
    <name type="common">African clawed frog</name>
    <dbReference type="NCBI Taxonomy" id="8355"/>
    <lineage>
        <taxon>Eukaryota</taxon>
        <taxon>Metazoa</taxon>
        <taxon>Chordata</taxon>
        <taxon>Craniata</taxon>
        <taxon>Vertebrata</taxon>
        <taxon>Euteleostomi</taxon>
        <taxon>Amphibia</taxon>
        <taxon>Batrachia</taxon>
        <taxon>Anura</taxon>
        <taxon>Pipoidea</taxon>
        <taxon>Pipidae</taxon>
        <taxon>Xenopodinae</taxon>
        <taxon>Xenopus</taxon>
        <taxon>Xenopus</taxon>
    </lineage>
</organism>